<dbReference type="EMBL" id="CP000416">
    <property type="protein sequence ID" value="ABJ64762.1"/>
    <property type="molecule type" value="Genomic_DNA"/>
</dbReference>
<dbReference type="RefSeq" id="WP_011668496.1">
    <property type="nucleotide sequence ID" value="NC_008497.1"/>
</dbReference>
<dbReference type="SMR" id="Q03PW0"/>
<dbReference type="STRING" id="387344.LVIS_1687"/>
<dbReference type="KEGG" id="lbr:LVIS_1687"/>
<dbReference type="eggNOG" id="COG0090">
    <property type="taxonomic scope" value="Bacteria"/>
</dbReference>
<dbReference type="HOGENOM" id="CLU_036235_2_1_9"/>
<dbReference type="Proteomes" id="UP000001652">
    <property type="component" value="Chromosome"/>
</dbReference>
<dbReference type="GO" id="GO:0015934">
    <property type="term" value="C:large ribosomal subunit"/>
    <property type="evidence" value="ECO:0007669"/>
    <property type="project" value="InterPro"/>
</dbReference>
<dbReference type="GO" id="GO:0019843">
    <property type="term" value="F:rRNA binding"/>
    <property type="evidence" value="ECO:0007669"/>
    <property type="project" value="UniProtKB-UniRule"/>
</dbReference>
<dbReference type="GO" id="GO:0003735">
    <property type="term" value="F:structural constituent of ribosome"/>
    <property type="evidence" value="ECO:0007669"/>
    <property type="project" value="InterPro"/>
</dbReference>
<dbReference type="GO" id="GO:0016740">
    <property type="term" value="F:transferase activity"/>
    <property type="evidence" value="ECO:0007669"/>
    <property type="project" value="InterPro"/>
</dbReference>
<dbReference type="GO" id="GO:0002181">
    <property type="term" value="P:cytoplasmic translation"/>
    <property type="evidence" value="ECO:0007669"/>
    <property type="project" value="TreeGrafter"/>
</dbReference>
<dbReference type="FunFam" id="2.30.30.30:FF:000001">
    <property type="entry name" value="50S ribosomal protein L2"/>
    <property type="match status" value="1"/>
</dbReference>
<dbReference type="FunFam" id="2.40.50.140:FF:000003">
    <property type="entry name" value="50S ribosomal protein L2"/>
    <property type="match status" value="1"/>
</dbReference>
<dbReference type="FunFam" id="4.10.950.10:FF:000001">
    <property type="entry name" value="50S ribosomal protein L2"/>
    <property type="match status" value="1"/>
</dbReference>
<dbReference type="Gene3D" id="2.30.30.30">
    <property type="match status" value="1"/>
</dbReference>
<dbReference type="Gene3D" id="2.40.50.140">
    <property type="entry name" value="Nucleic acid-binding proteins"/>
    <property type="match status" value="1"/>
</dbReference>
<dbReference type="Gene3D" id="4.10.950.10">
    <property type="entry name" value="Ribosomal protein L2, domain 3"/>
    <property type="match status" value="1"/>
</dbReference>
<dbReference type="HAMAP" id="MF_01320_B">
    <property type="entry name" value="Ribosomal_uL2_B"/>
    <property type="match status" value="1"/>
</dbReference>
<dbReference type="InterPro" id="IPR012340">
    <property type="entry name" value="NA-bd_OB-fold"/>
</dbReference>
<dbReference type="InterPro" id="IPR014722">
    <property type="entry name" value="Rib_uL2_dom2"/>
</dbReference>
<dbReference type="InterPro" id="IPR002171">
    <property type="entry name" value="Ribosomal_uL2"/>
</dbReference>
<dbReference type="InterPro" id="IPR005880">
    <property type="entry name" value="Ribosomal_uL2_bac/org-type"/>
</dbReference>
<dbReference type="InterPro" id="IPR022669">
    <property type="entry name" value="Ribosomal_uL2_C"/>
</dbReference>
<dbReference type="InterPro" id="IPR022671">
    <property type="entry name" value="Ribosomal_uL2_CS"/>
</dbReference>
<dbReference type="InterPro" id="IPR014726">
    <property type="entry name" value="Ribosomal_uL2_dom3"/>
</dbReference>
<dbReference type="InterPro" id="IPR022666">
    <property type="entry name" value="Ribosomal_uL2_RNA-bd_dom"/>
</dbReference>
<dbReference type="InterPro" id="IPR008991">
    <property type="entry name" value="Translation_prot_SH3-like_sf"/>
</dbReference>
<dbReference type="NCBIfam" id="TIGR01171">
    <property type="entry name" value="rplB_bact"/>
    <property type="match status" value="1"/>
</dbReference>
<dbReference type="PANTHER" id="PTHR13691:SF5">
    <property type="entry name" value="LARGE RIBOSOMAL SUBUNIT PROTEIN UL2M"/>
    <property type="match status" value="1"/>
</dbReference>
<dbReference type="PANTHER" id="PTHR13691">
    <property type="entry name" value="RIBOSOMAL PROTEIN L2"/>
    <property type="match status" value="1"/>
</dbReference>
<dbReference type="Pfam" id="PF00181">
    <property type="entry name" value="Ribosomal_L2"/>
    <property type="match status" value="1"/>
</dbReference>
<dbReference type="Pfam" id="PF03947">
    <property type="entry name" value="Ribosomal_L2_C"/>
    <property type="match status" value="1"/>
</dbReference>
<dbReference type="PIRSF" id="PIRSF002158">
    <property type="entry name" value="Ribosomal_L2"/>
    <property type="match status" value="1"/>
</dbReference>
<dbReference type="SMART" id="SM01383">
    <property type="entry name" value="Ribosomal_L2"/>
    <property type="match status" value="1"/>
</dbReference>
<dbReference type="SMART" id="SM01382">
    <property type="entry name" value="Ribosomal_L2_C"/>
    <property type="match status" value="1"/>
</dbReference>
<dbReference type="SUPFAM" id="SSF50249">
    <property type="entry name" value="Nucleic acid-binding proteins"/>
    <property type="match status" value="1"/>
</dbReference>
<dbReference type="SUPFAM" id="SSF50104">
    <property type="entry name" value="Translation proteins SH3-like domain"/>
    <property type="match status" value="1"/>
</dbReference>
<dbReference type="PROSITE" id="PS00467">
    <property type="entry name" value="RIBOSOMAL_L2"/>
    <property type="match status" value="1"/>
</dbReference>
<comment type="function">
    <text evidence="1">One of the primary rRNA binding proteins. Required for association of the 30S and 50S subunits to form the 70S ribosome, for tRNA binding and peptide bond formation. It has been suggested to have peptidyltransferase activity; this is somewhat controversial. Makes several contacts with the 16S rRNA in the 70S ribosome.</text>
</comment>
<comment type="subunit">
    <text evidence="1">Part of the 50S ribosomal subunit. Forms a bridge to the 30S subunit in the 70S ribosome.</text>
</comment>
<comment type="similarity">
    <text evidence="1">Belongs to the universal ribosomal protein uL2 family.</text>
</comment>
<protein>
    <recommendedName>
        <fullName evidence="1">Large ribosomal subunit protein uL2</fullName>
    </recommendedName>
    <alternativeName>
        <fullName evidence="3">50S ribosomal protein L2</fullName>
    </alternativeName>
</protein>
<name>RL2_LEVBA</name>
<organism>
    <name type="scientific">Levilactobacillus brevis (strain ATCC 367 / BCRC 12310 / CIP 105137 / JCM 1170 / LMG 11437 / NCIMB 947 / NCTC 947)</name>
    <name type="common">Lactobacillus brevis</name>
    <dbReference type="NCBI Taxonomy" id="387344"/>
    <lineage>
        <taxon>Bacteria</taxon>
        <taxon>Bacillati</taxon>
        <taxon>Bacillota</taxon>
        <taxon>Bacilli</taxon>
        <taxon>Lactobacillales</taxon>
        <taxon>Lactobacillaceae</taxon>
        <taxon>Levilactobacillus</taxon>
    </lineage>
</organism>
<proteinExistence type="inferred from homology"/>
<reference key="1">
    <citation type="journal article" date="2006" name="Proc. Natl. Acad. Sci. U.S.A.">
        <title>Comparative genomics of the lactic acid bacteria.</title>
        <authorList>
            <person name="Makarova K.S."/>
            <person name="Slesarev A."/>
            <person name="Wolf Y.I."/>
            <person name="Sorokin A."/>
            <person name="Mirkin B."/>
            <person name="Koonin E.V."/>
            <person name="Pavlov A."/>
            <person name="Pavlova N."/>
            <person name="Karamychev V."/>
            <person name="Polouchine N."/>
            <person name="Shakhova V."/>
            <person name="Grigoriev I."/>
            <person name="Lou Y."/>
            <person name="Rohksar D."/>
            <person name="Lucas S."/>
            <person name="Huang K."/>
            <person name="Goodstein D.M."/>
            <person name="Hawkins T."/>
            <person name="Plengvidhya V."/>
            <person name="Welker D."/>
            <person name="Hughes J."/>
            <person name="Goh Y."/>
            <person name="Benson A."/>
            <person name="Baldwin K."/>
            <person name="Lee J.-H."/>
            <person name="Diaz-Muniz I."/>
            <person name="Dosti B."/>
            <person name="Smeianov V."/>
            <person name="Wechter W."/>
            <person name="Barabote R."/>
            <person name="Lorca G."/>
            <person name="Altermann E."/>
            <person name="Barrangou R."/>
            <person name="Ganesan B."/>
            <person name="Xie Y."/>
            <person name="Rawsthorne H."/>
            <person name="Tamir D."/>
            <person name="Parker C."/>
            <person name="Breidt F."/>
            <person name="Broadbent J.R."/>
            <person name="Hutkins R."/>
            <person name="O'Sullivan D."/>
            <person name="Steele J."/>
            <person name="Unlu G."/>
            <person name="Saier M.H. Jr."/>
            <person name="Klaenhammer T."/>
            <person name="Richardson P."/>
            <person name="Kozyavkin S."/>
            <person name="Weimer B.C."/>
            <person name="Mills D.A."/>
        </authorList>
    </citation>
    <scope>NUCLEOTIDE SEQUENCE [LARGE SCALE GENOMIC DNA]</scope>
    <source>
        <strain>ATCC 367 / BCRC 12310 / CIP 105137 / JCM 1170 / LMG 11437 / NCIMB 947 / NCTC 947</strain>
    </source>
</reference>
<keyword id="KW-1185">Reference proteome</keyword>
<keyword id="KW-0687">Ribonucleoprotein</keyword>
<keyword id="KW-0689">Ribosomal protein</keyword>
<keyword id="KW-0694">RNA-binding</keyword>
<keyword id="KW-0699">rRNA-binding</keyword>
<gene>
    <name evidence="1" type="primary">rplB</name>
    <name type="ordered locus">LVIS_1687</name>
</gene>
<accession>Q03PW0</accession>
<evidence type="ECO:0000255" key="1">
    <source>
        <dbReference type="HAMAP-Rule" id="MF_01320"/>
    </source>
</evidence>
<evidence type="ECO:0000256" key="2">
    <source>
        <dbReference type="SAM" id="MobiDB-lite"/>
    </source>
</evidence>
<evidence type="ECO:0000305" key="3"/>
<sequence>MAIKKYKPTSNGRRNMTSLVYKDVITKTTPEKSLLDSQSHSAGRNNAGKMTVRHRGGGNKRQYRIIDFKRIKDDVPATVKAIEYDPNRTANIALLVYADGVKSYIIAPKGLKVGDKVQSGPEADIKTGNALPLKNIPFGTVIHNIELKPGKGGQLVRSAGTSAQLLGKANDEKYVLVRLSSGEVRMVLSVNRATIGAVGNEEHELVNVGKAGRTRWAGQRPHVRGSVMNPNDHPHGGGEGKAPVGLPSPLSPWGKKTVGKKTRSKKNKTEKFIVRHRKGSKM</sequence>
<feature type="chain" id="PRO_0000309936" description="Large ribosomal subunit protein uL2">
    <location>
        <begin position="1"/>
        <end position="282"/>
    </location>
</feature>
<feature type="region of interest" description="Disordered" evidence="2">
    <location>
        <begin position="31"/>
        <end position="56"/>
    </location>
</feature>
<feature type="region of interest" description="Disordered" evidence="2">
    <location>
        <begin position="226"/>
        <end position="282"/>
    </location>
</feature>
<feature type="compositionally biased region" description="Polar residues" evidence="2">
    <location>
        <begin position="35"/>
        <end position="44"/>
    </location>
</feature>
<feature type="compositionally biased region" description="Basic residues" evidence="2">
    <location>
        <begin position="257"/>
        <end position="266"/>
    </location>
</feature>